<accession>Q8TXI3</accession>
<name>MRE11_METKA</name>
<keyword id="KW-0227">DNA damage</keyword>
<keyword id="KW-0234">DNA repair</keyword>
<keyword id="KW-0255">Endonuclease</keyword>
<keyword id="KW-0269">Exonuclease</keyword>
<keyword id="KW-0378">Hydrolase</keyword>
<keyword id="KW-0464">Manganese</keyword>
<keyword id="KW-0479">Metal-binding</keyword>
<keyword id="KW-0540">Nuclease</keyword>
<keyword id="KW-1185">Reference proteome</keyword>
<evidence type="ECO:0000255" key="1">
    <source>
        <dbReference type="HAMAP-Rule" id="MF_02044"/>
    </source>
</evidence>
<evidence type="ECO:0000256" key="2">
    <source>
        <dbReference type="SAM" id="MobiDB-lite"/>
    </source>
</evidence>
<dbReference type="EC" id="3.1.-.-" evidence="1"/>
<dbReference type="EMBL" id="AE009439">
    <property type="protein sequence ID" value="AAM01905.1"/>
    <property type="molecule type" value="Genomic_DNA"/>
</dbReference>
<dbReference type="SMR" id="Q8TXI3"/>
<dbReference type="STRING" id="190192.MK0691"/>
<dbReference type="PaxDb" id="190192-MK0691"/>
<dbReference type="EnsemblBacteria" id="AAM01905">
    <property type="protein sequence ID" value="AAM01905"/>
    <property type="gene ID" value="MK0691"/>
</dbReference>
<dbReference type="KEGG" id="mka:MK0691"/>
<dbReference type="HOGENOM" id="CLU_606374_0_0_2"/>
<dbReference type="InParanoid" id="Q8TXI3"/>
<dbReference type="OrthoDB" id="11638at2157"/>
<dbReference type="Proteomes" id="UP000001826">
    <property type="component" value="Chromosome"/>
</dbReference>
<dbReference type="GO" id="GO:0008408">
    <property type="term" value="F:3'-5' exonuclease activity"/>
    <property type="evidence" value="ECO:0007669"/>
    <property type="project" value="UniProtKB-UniRule"/>
</dbReference>
<dbReference type="GO" id="GO:0045027">
    <property type="term" value="F:DNA end binding"/>
    <property type="evidence" value="ECO:0007669"/>
    <property type="project" value="UniProtKB-UniRule"/>
</dbReference>
<dbReference type="GO" id="GO:0004519">
    <property type="term" value="F:endonuclease activity"/>
    <property type="evidence" value="ECO:0007669"/>
    <property type="project" value="UniProtKB-UniRule"/>
</dbReference>
<dbReference type="GO" id="GO:0030145">
    <property type="term" value="F:manganese ion binding"/>
    <property type="evidence" value="ECO:0007669"/>
    <property type="project" value="UniProtKB-UniRule"/>
</dbReference>
<dbReference type="GO" id="GO:0000403">
    <property type="term" value="F:Y-form DNA binding"/>
    <property type="evidence" value="ECO:0007669"/>
    <property type="project" value="UniProtKB-UniRule"/>
</dbReference>
<dbReference type="GO" id="GO:0006302">
    <property type="term" value="P:double-strand break repair"/>
    <property type="evidence" value="ECO:0007669"/>
    <property type="project" value="UniProtKB-UniRule"/>
</dbReference>
<dbReference type="CDD" id="cd00840">
    <property type="entry name" value="MPP_Mre11_N"/>
    <property type="match status" value="1"/>
</dbReference>
<dbReference type="Gene3D" id="3.60.21.10">
    <property type="match status" value="1"/>
</dbReference>
<dbReference type="HAMAP" id="MF_02044">
    <property type="entry name" value="Mre11"/>
    <property type="match status" value="1"/>
</dbReference>
<dbReference type="InterPro" id="IPR004843">
    <property type="entry name" value="Calcineurin-like_PHP_ApaH"/>
</dbReference>
<dbReference type="InterPro" id="IPR050535">
    <property type="entry name" value="DNA_Repair-Maintenance_Comp"/>
</dbReference>
<dbReference type="InterPro" id="IPR029052">
    <property type="entry name" value="Metallo-depent_PP-like"/>
</dbReference>
<dbReference type="InterPro" id="IPR032885">
    <property type="entry name" value="Mre11_archaea-type"/>
</dbReference>
<dbReference type="InterPro" id="IPR041796">
    <property type="entry name" value="Mre11_N"/>
</dbReference>
<dbReference type="PANTHER" id="PTHR30337">
    <property type="entry name" value="COMPONENT OF ATP-DEPENDENT DSDNA EXONUCLEASE"/>
    <property type="match status" value="1"/>
</dbReference>
<dbReference type="PANTHER" id="PTHR30337:SF0">
    <property type="entry name" value="NUCLEASE SBCCD SUBUNIT D"/>
    <property type="match status" value="1"/>
</dbReference>
<dbReference type="Pfam" id="PF00149">
    <property type="entry name" value="Metallophos"/>
    <property type="match status" value="1"/>
</dbReference>
<dbReference type="SUPFAM" id="SSF56300">
    <property type="entry name" value="Metallo-dependent phosphatases"/>
    <property type="match status" value="1"/>
</dbReference>
<gene>
    <name evidence="1" type="primary">mre11</name>
    <name type="synonym">sbcD</name>
    <name type="ordered locus">MK0691</name>
</gene>
<sequence length="451" mass="50627">MRMAHVADVHLGHALMNLRSREEAVMETFERLMEEVRECSVDVLVIAGDLFEHARPKTEALYLAVEKLSELKEDGVEIVATAGNHEIRRRKGAVSPISVLERMGLVRHLYYSERRPERHRYTATFDGVRVTFHGLQYLPKNSFVERAKVIRAKYRPDPEADVNVAIFHQALPGTIPDESEIVEPAYFPEGHDYYAMGHVHVPSREEKIHGSPAPYPGSPEPLTFLEVKDERGAHKRRGFFLVEFDRGGLVEYEFVEVEWSRELSVVEVSGERWEEELRRRVRRGQIVKVVAKDTGASPEEVEKVAIEAGADRCVVELRERRREVEEGDETEGPLDLEGIIREGVKRARAATLTRVDVPDDVVVEVALEILRGVREDNPPDLGDVEGIVAGEPPSEGSEESSEEPEESDGEEVGLEVEEVKVESRGTSSEGMSRAGSKLGSSGRPSLDRWIG</sequence>
<feature type="chain" id="PRO_0000138690" description="DNA double-strand break repair protein Mre11">
    <location>
        <begin position="1"/>
        <end position="451"/>
    </location>
</feature>
<feature type="region of interest" description="Disordered" evidence="2">
    <location>
        <begin position="374"/>
        <end position="451"/>
    </location>
</feature>
<feature type="compositionally biased region" description="Acidic residues" evidence="2">
    <location>
        <begin position="396"/>
        <end position="416"/>
    </location>
</feature>
<feature type="active site" description="Proton donor" evidence="1">
    <location>
        <position position="85"/>
    </location>
</feature>
<feature type="binding site" evidence="1">
    <location>
        <position position="8"/>
    </location>
    <ligand>
        <name>Mn(2+)</name>
        <dbReference type="ChEBI" id="CHEBI:29035"/>
        <label>1</label>
    </ligand>
</feature>
<feature type="binding site" evidence="1">
    <location>
        <position position="10"/>
    </location>
    <ligand>
        <name>Mn(2+)</name>
        <dbReference type="ChEBI" id="CHEBI:29035"/>
        <label>1</label>
    </ligand>
</feature>
<feature type="binding site" evidence="1">
    <location>
        <position position="49"/>
    </location>
    <ligand>
        <name>Mn(2+)</name>
        <dbReference type="ChEBI" id="CHEBI:29035"/>
        <label>1</label>
    </ligand>
</feature>
<feature type="binding site" evidence="1">
    <location>
        <position position="49"/>
    </location>
    <ligand>
        <name>Mn(2+)</name>
        <dbReference type="ChEBI" id="CHEBI:29035"/>
        <label>2</label>
    </ligand>
</feature>
<feature type="binding site" evidence="1">
    <location>
        <position position="84"/>
    </location>
    <ligand>
        <name>Mn(2+)</name>
        <dbReference type="ChEBI" id="CHEBI:29035"/>
        <label>2</label>
    </ligand>
</feature>
<feature type="binding site" evidence="1">
    <location>
        <position position="168"/>
    </location>
    <ligand>
        <name>Mn(2+)</name>
        <dbReference type="ChEBI" id="CHEBI:29035"/>
        <label>2</label>
    </ligand>
</feature>
<feature type="binding site" evidence="1">
    <location>
        <position position="198"/>
    </location>
    <ligand>
        <name>Mn(2+)</name>
        <dbReference type="ChEBI" id="CHEBI:29035"/>
        <label>2</label>
    </ligand>
</feature>
<feature type="binding site" evidence="1">
    <location>
        <position position="200"/>
    </location>
    <ligand>
        <name>Mn(2+)</name>
        <dbReference type="ChEBI" id="CHEBI:29035"/>
        <label>1</label>
    </ligand>
</feature>
<reference key="1">
    <citation type="journal article" date="2002" name="Proc. Natl. Acad. Sci. U.S.A.">
        <title>The complete genome of hyperthermophile Methanopyrus kandleri AV19 and monophyly of archaeal methanogens.</title>
        <authorList>
            <person name="Slesarev A.I."/>
            <person name="Mezhevaya K.V."/>
            <person name="Makarova K.S."/>
            <person name="Polushin N.N."/>
            <person name="Shcherbinina O.V."/>
            <person name="Shakhova V.V."/>
            <person name="Belova G.I."/>
            <person name="Aravind L."/>
            <person name="Natale D.A."/>
            <person name="Rogozin I.B."/>
            <person name="Tatusov R.L."/>
            <person name="Wolf Y.I."/>
            <person name="Stetter K.O."/>
            <person name="Malykh A.G."/>
            <person name="Koonin E.V."/>
            <person name="Kozyavkin S.A."/>
        </authorList>
    </citation>
    <scope>NUCLEOTIDE SEQUENCE [LARGE SCALE GENOMIC DNA]</scope>
    <source>
        <strain>AV19 / DSM 6324 / JCM 9639 / NBRC 100938</strain>
    </source>
</reference>
<proteinExistence type="inferred from homology"/>
<organism>
    <name type="scientific">Methanopyrus kandleri (strain AV19 / DSM 6324 / JCM 9639 / NBRC 100938)</name>
    <dbReference type="NCBI Taxonomy" id="190192"/>
    <lineage>
        <taxon>Archaea</taxon>
        <taxon>Methanobacteriati</taxon>
        <taxon>Methanobacteriota</taxon>
        <taxon>Methanomada group</taxon>
        <taxon>Methanopyri</taxon>
        <taxon>Methanopyrales</taxon>
        <taxon>Methanopyraceae</taxon>
        <taxon>Methanopyrus</taxon>
    </lineage>
</organism>
<comment type="function">
    <text evidence="1">Part of the Rad50/Mre11 complex, which is involved in the early steps of DNA double-strand break (DSB) repair. The complex may facilitate opening of the processed DNA ends to aid in the recruitment of HerA and NurA. Mre11 binds to DSB ends and has both double-stranded 3'-5' exonuclease activity and single-stranded endonuclease activity.</text>
</comment>
<comment type="cofactor">
    <cofactor evidence="1">
        <name>Mn(2+)</name>
        <dbReference type="ChEBI" id="CHEBI:29035"/>
    </cofactor>
    <text evidence="1">Binds 2 manganese ions per subunit.</text>
</comment>
<comment type="activity regulation">
    <text evidence="1">Nuclease activity is regulated by Rad50.</text>
</comment>
<comment type="subunit">
    <text evidence="1">Homodimer. Forms a heterotetramer composed of two Mre11 subunits and two Rad50 subunits.</text>
</comment>
<comment type="similarity">
    <text evidence="1">Belongs to the MRE11/RAD32 family.</text>
</comment>
<protein>
    <recommendedName>
        <fullName evidence="1">DNA double-strand break repair protein Mre11</fullName>
        <ecNumber evidence="1">3.1.-.-</ecNumber>
    </recommendedName>
</protein>